<feature type="chain" id="PRO_0000059067" description="Thymidine phosphorylase">
    <location>
        <begin position="1"/>
        <end position="440"/>
    </location>
</feature>
<protein>
    <recommendedName>
        <fullName evidence="1">Thymidine phosphorylase</fullName>
        <ecNumber evidence="1">2.4.2.4</ecNumber>
    </recommendedName>
    <alternativeName>
        <fullName evidence="1">TdRPase</fullName>
    </alternativeName>
</protein>
<sequence length="440" mass="47196">MFLAQEIIRKKRDGHALSDEEIRFFINGIRDNTISEGQIAALAMTIFFHDMTMPERVSLTMAMRDSGTVLDWKSLHLNGPIVDKHSTGGVGDVTSLMLGPMVAACGGYIPMISGRGLGHTGGTLDKLESIPGFDIFPDDNRFREIIKDVGVAIIGQTSSLAPADKRFYATRDITATVDSIPLITASILAKKLAEGLDALVMDVKVGSGAFMPTYELSEALAEAIVGVANGAGVRTTALLTDMNQVLASSAGNAVEVREAVQFLTGEYRNPRLFDVTMALCVEMLISGKLAKDDAEARAKLQAVLDNGKAAEVFGRMVAAQKGPTDFVENYAKYLPTAMLTKAVYADTEGFVSEMDTRALGMAVVAMGGGRRQASDTIDYSVGFTDMARLGDQVDGQRPLAVIHAKDENSWQEASKAVKAAIKLADKAPESTPTVYRRISE</sequence>
<comment type="function">
    <text evidence="1">The enzymes which catalyze the reversible phosphorolysis of pyrimidine nucleosides are involved in the degradation of these compounds and in their utilization as carbon and energy sources, or in the rescue of pyrimidine bases for nucleotide synthesis.</text>
</comment>
<comment type="catalytic activity">
    <reaction evidence="1">
        <text>thymidine + phosphate = 2-deoxy-alpha-D-ribose 1-phosphate + thymine</text>
        <dbReference type="Rhea" id="RHEA:16037"/>
        <dbReference type="ChEBI" id="CHEBI:17748"/>
        <dbReference type="ChEBI" id="CHEBI:17821"/>
        <dbReference type="ChEBI" id="CHEBI:43474"/>
        <dbReference type="ChEBI" id="CHEBI:57259"/>
        <dbReference type="EC" id="2.4.2.4"/>
    </reaction>
</comment>
<comment type="pathway">
    <text evidence="1">Pyrimidine metabolism; dTMP biosynthesis via salvage pathway; dTMP from thymine: step 1/2.</text>
</comment>
<comment type="subunit">
    <text evidence="1">Homodimer.</text>
</comment>
<comment type="similarity">
    <text evidence="1">Belongs to the thymidine/pyrimidine-nucleoside phosphorylase family.</text>
</comment>
<proteinExistence type="inferred from homology"/>
<reference key="1">
    <citation type="journal article" date="2005" name="Nucleic Acids Res.">
        <title>Genome dynamics and diversity of Shigella species, the etiologic agents of bacillary dysentery.</title>
        <authorList>
            <person name="Yang F."/>
            <person name="Yang J."/>
            <person name="Zhang X."/>
            <person name="Chen L."/>
            <person name="Jiang Y."/>
            <person name="Yan Y."/>
            <person name="Tang X."/>
            <person name="Wang J."/>
            <person name="Xiong Z."/>
            <person name="Dong J."/>
            <person name="Xue Y."/>
            <person name="Zhu Y."/>
            <person name="Xu X."/>
            <person name="Sun L."/>
            <person name="Chen S."/>
            <person name="Nie H."/>
            <person name="Peng J."/>
            <person name="Xu J."/>
            <person name="Wang Y."/>
            <person name="Yuan Z."/>
            <person name="Wen Y."/>
            <person name="Yao Z."/>
            <person name="Shen Y."/>
            <person name="Qiang B."/>
            <person name="Hou Y."/>
            <person name="Yu J."/>
            <person name="Jin Q."/>
        </authorList>
    </citation>
    <scope>NUCLEOTIDE SEQUENCE [LARGE SCALE GENOMIC DNA]</scope>
    <source>
        <strain>Sd197</strain>
    </source>
</reference>
<organism>
    <name type="scientific">Shigella dysenteriae serotype 1 (strain Sd197)</name>
    <dbReference type="NCBI Taxonomy" id="300267"/>
    <lineage>
        <taxon>Bacteria</taxon>
        <taxon>Pseudomonadati</taxon>
        <taxon>Pseudomonadota</taxon>
        <taxon>Gammaproteobacteria</taxon>
        <taxon>Enterobacterales</taxon>
        <taxon>Enterobacteriaceae</taxon>
        <taxon>Shigella</taxon>
    </lineage>
</organism>
<evidence type="ECO:0000255" key="1">
    <source>
        <dbReference type="HAMAP-Rule" id="MF_01628"/>
    </source>
</evidence>
<accession>Q327L4</accession>
<keyword id="KW-0328">Glycosyltransferase</keyword>
<keyword id="KW-1185">Reference proteome</keyword>
<keyword id="KW-0808">Transferase</keyword>
<gene>
    <name evidence="1" type="primary">deoA</name>
    <name type="ordered locus">SDY_4642</name>
</gene>
<dbReference type="EC" id="2.4.2.4" evidence="1"/>
<dbReference type="EMBL" id="CP000034">
    <property type="protein sequence ID" value="ABB64491.1"/>
    <property type="molecule type" value="Genomic_DNA"/>
</dbReference>
<dbReference type="RefSeq" id="WP_000477813.1">
    <property type="nucleotide sequence ID" value="NC_007606.1"/>
</dbReference>
<dbReference type="RefSeq" id="YP_405982.1">
    <property type="nucleotide sequence ID" value="NC_007606.1"/>
</dbReference>
<dbReference type="SMR" id="Q327L4"/>
<dbReference type="STRING" id="300267.SDY_4642"/>
<dbReference type="EnsemblBacteria" id="ABB64491">
    <property type="protein sequence ID" value="ABB64491"/>
    <property type="gene ID" value="SDY_4642"/>
</dbReference>
<dbReference type="KEGG" id="sdy:SDY_4642"/>
<dbReference type="PATRIC" id="fig|300267.13.peg.5503"/>
<dbReference type="HOGENOM" id="CLU_025040_0_1_6"/>
<dbReference type="UniPathway" id="UPA00578">
    <property type="reaction ID" value="UER00638"/>
</dbReference>
<dbReference type="Proteomes" id="UP000002716">
    <property type="component" value="Chromosome"/>
</dbReference>
<dbReference type="GO" id="GO:0005829">
    <property type="term" value="C:cytosol"/>
    <property type="evidence" value="ECO:0007669"/>
    <property type="project" value="TreeGrafter"/>
</dbReference>
<dbReference type="GO" id="GO:0004645">
    <property type="term" value="F:1,4-alpha-oligoglucan phosphorylase activity"/>
    <property type="evidence" value="ECO:0007669"/>
    <property type="project" value="InterPro"/>
</dbReference>
<dbReference type="GO" id="GO:0009032">
    <property type="term" value="F:thymidine phosphorylase activity"/>
    <property type="evidence" value="ECO:0007669"/>
    <property type="project" value="UniProtKB-UniRule"/>
</dbReference>
<dbReference type="GO" id="GO:0006206">
    <property type="term" value="P:pyrimidine nucleobase metabolic process"/>
    <property type="evidence" value="ECO:0007669"/>
    <property type="project" value="InterPro"/>
</dbReference>
<dbReference type="GO" id="GO:0046104">
    <property type="term" value="P:thymidine metabolic process"/>
    <property type="evidence" value="ECO:0007669"/>
    <property type="project" value="UniProtKB-UniRule"/>
</dbReference>
<dbReference type="FunFam" id="3.40.1030.10:FF:000001">
    <property type="entry name" value="Thymidine phosphorylase"/>
    <property type="match status" value="1"/>
</dbReference>
<dbReference type="FunFam" id="3.90.1170.30:FF:000001">
    <property type="entry name" value="Thymidine phosphorylase"/>
    <property type="match status" value="1"/>
</dbReference>
<dbReference type="Gene3D" id="3.40.1030.10">
    <property type="entry name" value="Nucleoside phosphorylase/phosphoribosyltransferase catalytic domain"/>
    <property type="match status" value="1"/>
</dbReference>
<dbReference type="Gene3D" id="3.90.1170.30">
    <property type="entry name" value="Pyrimidine nucleoside phosphorylase-like, C-terminal domain"/>
    <property type="match status" value="1"/>
</dbReference>
<dbReference type="Gene3D" id="1.20.970.10">
    <property type="entry name" value="Transferase, Pyrimidine Nucleoside Phosphorylase, Chain C"/>
    <property type="match status" value="1"/>
</dbReference>
<dbReference type="HAMAP" id="MF_01628">
    <property type="entry name" value="Thymid_phosp"/>
    <property type="match status" value="1"/>
</dbReference>
<dbReference type="InterPro" id="IPR000312">
    <property type="entry name" value="Glycosyl_Trfase_fam3"/>
</dbReference>
<dbReference type="InterPro" id="IPR017459">
    <property type="entry name" value="Glycosyl_Trfase_fam3_N_dom"/>
</dbReference>
<dbReference type="InterPro" id="IPR036320">
    <property type="entry name" value="Glycosyl_Trfase_fam3_N_dom_sf"/>
</dbReference>
<dbReference type="InterPro" id="IPR035902">
    <property type="entry name" value="Nuc_phospho_transferase"/>
</dbReference>
<dbReference type="InterPro" id="IPR036566">
    <property type="entry name" value="PYNP-like_C_sf"/>
</dbReference>
<dbReference type="InterPro" id="IPR013102">
    <property type="entry name" value="PYNP_C"/>
</dbReference>
<dbReference type="InterPro" id="IPR018090">
    <property type="entry name" value="Pyrmidine_PPas_bac/euk"/>
</dbReference>
<dbReference type="InterPro" id="IPR017872">
    <property type="entry name" value="Pyrmidine_PPase_CS"/>
</dbReference>
<dbReference type="InterPro" id="IPR000053">
    <property type="entry name" value="Thymidine/pyrmidine_PPase"/>
</dbReference>
<dbReference type="InterPro" id="IPR013465">
    <property type="entry name" value="Thymidine_Pase"/>
</dbReference>
<dbReference type="NCBIfam" id="NF004490">
    <property type="entry name" value="PRK05820.1"/>
    <property type="match status" value="1"/>
</dbReference>
<dbReference type="NCBIfam" id="TIGR02643">
    <property type="entry name" value="T_phosphoryl"/>
    <property type="match status" value="1"/>
</dbReference>
<dbReference type="NCBIfam" id="TIGR02644">
    <property type="entry name" value="Y_phosphoryl"/>
    <property type="match status" value="1"/>
</dbReference>
<dbReference type="PANTHER" id="PTHR10515">
    <property type="entry name" value="THYMIDINE PHOSPHORYLASE"/>
    <property type="match status" value="1"/>
</dbReference>
<dbReference type="PANTHER" id="PTHR10515:SF0">
    <property type="entry name" value="THYMIDINE PHOSPHORYLASE"/>
    <property type="match status" value="1"/>
</dbReference>
<dbReference type="Pfam" id="PF02885">
    <property type="entry name" value="Glycos_trans_3N"/>
    <property type="match status" value="1"/>
</dbReference>
<dbReference type="Pfam" id="PF00591">
    <property type="entry name" value="Glycos_transf_3"/>
    <property type="match status" value="1"/>
</dbReference>
<dbReference type="Pfam" id="PF07831">
    <property type="entry name" value="PYNP_C"/>
    <property type="match status" value="1"/>
</dbReference>
<dbReference type="PIRSF" id="PIRSF000478">
    <property type="entry name" value="TP_PyNP"/>
    <property type="match status" value="1"/>
</dbReference>
<dbReference type="SMART" id="SM00941">
    <property type="entry name" value="PYNP_C"/>
    <property type="match status" value="1"/>
</dbReference>
<dbReference type="SUPFAM" id="SSF52418">
    <property type="entry name" value="Nucleoside phosphorylase/phosphoribosyltransferase catalytic domain"/>
    <property type="match status" value="1"/>
</dbReference>
<dbReference type="SUPFAM" id="SSF47648">
    <property type="entry name" value="Nucleoside phosphorylase/phosphoribosyltransferase N-terminal domain"/>
    <property type="match status" value="1"/>
</dbReference>
<dbReference type="SUPFAM" id="SSF54680">
    <property type="entry name" value="Pyrimidine nucleoside phosphorylase C-terminal domain"/>
    <property type="match status" value="1"/>
</dbReference>
<dbReference type="PROSITE" id="PS00647">
    <property type="entry name" value="THYMID_PHOSPHORYLASE"/>
    <property type="match status" value="1"/>
</dbReference>
<name>TYPH_SHIDS</name>